<protein>
    <recommendedName>
        <fullName evidence="6">Big defensin</fullName>
        <shortName evidence="4">AiBD</shortName>
    </recommendedName>
</protein>
<feature type="signal peptide" evidence="2">
    <location>
        <begin position="1"/>
        <end position="28"/>
    </location>
</feature>
<feature type="propeptide" id="PRO_0000379965" evidence="1 2">
    <location>
        <begin position="29"/>
        <end position="34"/>
    </location>
</feature>
<feature type="chain" id="PRO_0000379966" description="Big defensin" evidence="1 2">
    <location>
        <begin position="39"/>
        <end position="122"/>
    </location>
</feature>
<feature type="disulfide bond" evidence="1">
    <location>
        <begin position="88"/>
        <end position="119"/>
    </location>
</feature>
<feature type="disulfide bond" evidence="1">
    <location>
        <begin position="95"/>
        <end position="114"/>
    </location>
</feature>
<feature type="disulfide bond" evidence="1">
    <location>
        <begin position="99"/>
        <end position="120"/>
    </location>
</feature>
<name>BDEF_ARGIR</name>
<evidence type="ECO:0000250" key="1">
    <source>
        <dbReference type="UniProtKB" id="P80957"/>
    </source>
</evidence>
<evidence type="ECO:0000255" key="2"/>
<evidence type="ECO:0000269" key="3">
    <source>
    </source>
</evidence>
<evidence type="ECO:0000303" key="4">
    <source>
    </source>
</evidence>
<evidence type="ECO:0000305" key="5"/>
<evidence type="ECO:0000312" key="6">
    <source>
        <dbReference type="EMBL" id="ABC61319.1"/>
    </source>
</evidence>
<proteinExistence type="evidence at transcript level"/>
<dbReference type="EMBL" id="DQ334340">
    <property type="protein sequence ID" value="ABC61319.1"/>
    <property type="molecule type" value="mRNA"/>
</dbReference>
<dbReference type="SMR" id="Q0H293"/>
<dbReference type="GO" id="GO:0005576">
    <property type="term" value="C:extracellular region"/>
    <property type="evidence" value="ECO:0000314"/>
    <property type="project" value="UniProtKB"/>
</dbReference>
<dbReference type="GO" id="GO:0050832">
    <property type="term" value="P:defense response to fungus"/>
    <property type="evidence" value="ECO:0000315"/>
    <property type="project" value="UniProtKB"/>
</dbReference>
<dbReference type="GO" id="GO:0050829">
    <property type="term" value="P:defense response to Gram-negative bacterium"/>
    <property type="evidence" value="ECO:0000315"/>
    <property type="project" value="UniProtKB"/>
</dbReference>
<dbReference type="GO" id="GO:0050830">
    <property type="term" value="P:defense response to Gram-positive bacterium"/>
    <property type="evidence" value="ECO:0000315"/>
    <property type="project" value="UniProtKB"/>
</dbReference>
<dbReference type="GO" id="GO:0031640">
    <property type="term" value="P:killing of cells of another organism"/>
    <property type="evidence" value="ECO:0007669"/>
    <property type="project" value="UniProtKB-KW"/>
</dbReference>
<dbReference type="FunFam" id="3.40.1620.80:FF:000001">
    <property type="entry name" value="Big defensin"/>
    <property type="match status" value="1"/>
</dbReference>
<dbReference type="Gene3D" id="2.20.20.10">
    <property type="entry name" value="Anthopleurin-A"/>
    <property type="match status" value="1"/>
</dbReference>
<dbReference type="Gene3D" id="3.40.1620.80">
    <property type="entry name" value="Big defensin, N-terminal domain"/>
    <property type="match status" value="1"/>
</dbReference>
<dbReference type="InterPro" id="IPR028060">
    <property type="entry name" value="Defensin_big_dom"/>
</dbReference>
<dbReference type="InterPro" id="IPR042033">
    <property type="entry name" value="Defensin_big_N"/>
</dbReference>
<dbReference type="InterPro" id="IPR023355">
    <property type="entry name" value="Myo_ane_neurotoxin_sf"/>
</dbReference>
<dbReference type="Pfam" id="PF14862">
    <property type="entry name" value="Defensin_big"/>
    <property type="match status" value="1"/>
</dbReference>
<sequence length="122" mass="13650">MTRPSLVRCYSLFFTALIVMAIICPAWSEEIPKSRKKRAIPIAYVGMAVAPQVFRWLVRAYGAAAVTAAGVTLRRVINRSRSNDNHSCYGNRGWCRSSCRSYEREYRGGNLGVCGSYKCCVT</sequence>
<accession>Q0H293</accession>
<comment type="function">
    <text evidence="3">Significantly inhibits the growth of Gram-negative and Gram-positive bacteria and fungi in vitro.</text>
</comment>
<comment type="subcellular location">
    <subcellularLocation>
        <location evidence="3">Secreted</location>
    </subcellularLocation>
</comment>
<comment type="tissue specificity">
    <text evidence="3">Expressed in hemocytes.</text>
</comment>
<comment type="similarity">
    <text evidence="5">Belongs to the big defensin family.</text>
</comment>
<keyword id="KW-0044">Antibiotic</keyword>
<keyword id="KW-0929">Antimicrobial</keyword>
<keyword id="KW-0165">Cleavage on pair of basic residues</keyword>
<keyword id="KW-0211">Defensin</keyword>
<keyword id="KW-1015">Disulfide bond</keyword>
<keyword id="KW-0295">Fungicide</keyword>
<keyword id="KW-0964">Secreted</keyword>
<keyword id="KW-0732">Signal</keyword>
<reference evidence="5 6" key="1">
    <citation type="journal article" date="2007" name="Mol. Immunol.">
        <title>Molecular cloning, expression of a big defensin gene from bay scallop Argopecten irradians and the antimicrobial activity of its recombinant protein.</title>
        <authorList>
            <person name="Zhao J."/>
            <person name="Song L."/>
            <person name="Li C."/>
            <person name="Ni D."/>
            <person name="Wu L."/>
            <person name="Zhu L."/>
            <person name="Wang H."/>
            <person name="Xu W."/>
        </authorList>
    </citation>
    <scope>NUCLEOTIDE SEQUENCE [MRNA]</scope>
    <scope>FUNCTION</scope>
    <scope>SUBCELLULAR LOCATION</scope>
    <scope>TISSUE SPECIFICITY</scope>
</reference>
<organism>
    <name type="scientific">Argopecten irradians</name>
    <name type="common">Bay scallop</name>
    <name type="synonym">Aequipecten irradians</name>
    <dbReference type="NCBI Taxonomy" id="31199"/>
    <lineage>
        <taxon>Eukaryota</taxon>
        <taxon>Metazoa</taxon>
        <taxon>Spiralia</taxon>
        <taxon>Lophotrochozoa</taxon>
        <taxon>Mollusca</taxon>
        <taxon>Bivalvia</taxon>
        <taxon>Autobranchia</taxon>
        <taxon>Pteriomorphia</taxon>
        <taxon>Pectinida</taxon>
        <taxon>Pectinoidea</taxon>
        <taxon>Pectinidae</taxon>
        <taxon>Argopecten</taxon>
    </lineage>
</organism>